<feature type="signal peptide" evidence="1">
    <location>
        <begin position="1"/>
        <end position="26"/>
    </location>
</feature>
<feature type="chain" id="PRO_0000024297" description="1-phosphatidylinositol phosphodiesterase">
    <location>
        <begin position="27"/>
        <end position="312"/>
    </location>
</feature>
<feature type="domain" description="PI-PLC X-box" evidence="2">
    <location>
        <begin position="27"/>
        <end position="176"/>
    </location>
</feature>
<feature type="active site" description="Proton acceptor" evidence="2">
    <location>
        <position position="40"/>
    </location>
</feature>
<feature type="active site" description="Proton donor" evidence="2">
    <location>
        <position position="90"/>
    </location>
</feature>
<feature type="sequence conflict" description="In Ref. 1; AAA16442." evidence="3" ref="1">
    <original>AKA</original>
    <variation>LKL</variation>
    <location>
        <begin position="234"/>
        <end position="236"/>
    </location>
</feature>
<feature type="sequence conflict" description="In Ref. 1; AAA16442." evidence="3" ref="1">
    <original>AFN</original>
    <variation>DL</variation>
    <location>
        <begin position="258"/>
        <end position="260"/>
    </location>
</feature>
<feature type="helix" evidence="6">
    <location>
        <begin position="14"/>
        <end position="16"/>
    </location>
</feature>
<feature type="helix" evidence="6">
    <location>
        <begin position="18"/>
        <end position="24"/>
    </location>
</feature>
<feature type="helix" evidence="6">
    <location>
        <begin position="31"/>
        <end position="33"/>
    </location>
</feature>
<feature type="strand" evidence="6">
    <location>
        <begin position="36"/>
        <end position="39"/>
    </location>
</feature>
<feature type="helix" evidence="6">
    <location>
        <begin position="42"/>
        <end position="46"/>
    </location>
</feature>
<feature type="helix" evidence="6">
    <location>
        <begin position="50"/>
        <end position="56"/>
    </location>
</feature>
<feature type="helix" evidence="6">
    <location>
        <begin position="63"/>
        <end position="68"/>
    </location>
</feature>
<feature type="strand" evidence="6">
    <location>
        <begin position="73"/>
        <end position="82"/>
    </location>
</feature>
<feature type="strand" evidence="6">
    <location>
        <begin position="85"/>
        <end position="90"/>
    </location>
</feature>
<feature type="strand" evidence="6">
    <location>
        <begin position="93"/>
        <end position="98"/>
    </location>
</feature>
<feature type="helix" evidence="6">
    <location>
        <begin position="99"/>
        <end position="112"/>
    </location>
</feature>
<feature type="strand" evidence="6">
    <location>
        <begin position="118"/>
        <end position="124"/>
    </location>
</feature>
<feature type="helix" evidence="6">
    <location>
        <begin position="136"/>
        <end position="143"/>
    </location>
</feature>
<feature type="turn" evidence="6">
    <location>
        <begin position="144"/>
        <end position="146"/>
    </location>
</feature>
<feature type="helix" evidence="6">
    <location>
        <begin position="148"/>
        <end position="150"/>
    </location>
</feature>
<feature type="turn" evidence="6">
    <location>
        <begin position="151"/>
        <end position="153"/>
    </location>
</feature>
<feature type="helix" evidence="6">
    <location>
        <begin position="164"/>
        <end position="167"/>
    </location>
</feature>
<feature type="strand" evidence="6">
    <location>
        <begin position="170"/>
        <end position="175"/>
    </location>
</feature>
<feature type="strand" evidence="6">
    <location>
        <begin position="177"/>
        <end position="179"/>
    </location>
</feature>
<feature type="strand" evidence="6">
    <location>
        <begin position="184"/>
        <end position="186"/>
    </location>
</feature>
<feature type="strand" evidence="7">
    <location>
        <begin position="189"/>
        <end position="191"/>
    </location>
</feature>
<feature type="strand" evidence="6">
    <location>
        <begin position="199"/>
        <end position="205"/>
    </location>
</feature>
<feature type="turn" evidence="6">
    <location>
        <begin position="206"/>
        <end position="209"/>
    </location>
</feature>
<feature type="strand" evidence="6">
    <location>
        <begin position="210"/>
        <end position="216"/>
    </location>
</feature>
<feature type="helix" evidence="6">
    <location>
        <begin position="222"/>
        <end position="237"/>
    </location>
</feature>
<feature type="strand" evidence="6">
    <location>
        <begin position="244"/>
        <end position="249"/>
    </location>
</feature>
<feature type="strand" evidence="5">
    <location>
        <begin position="256"/>
        <end position="258"/>
    </location>
</feature>
<feature type="strand" evidence="4">
    <location>
        <begin position="259"/>
        <end position="261"/>
    </location>
</feature>
<feature type="helix" evidence="6">
    <location>
        <begin position="262"/>
        <end position="279"/>
    </location>
</feature>
<feature type="strand" evidence="6">
    <location>
        <begin position="287"/>
        <end position="292"/>
    </location>
</feature>
<feature type="helix" evidence="6">
    <location>
        <begin position="303"/>
        <end position="309"/>
    </location>
</feature>
<comment type="function">
    <text>Cleaves glycosylphosphatidylinositol (GPI) and phosphatidylinositol (PI) anchors but not PI phosphates. Potential virulence factor.</text>
</comment>
<comment type="catalytic activity">
    <reaction>
        <text>a 1,2-diacyl-sn-glycero-3-phospho-(1D-myo-inositol) = 1D-myo-inositol 1,2-cyclic phosphate + a 1,2-diacyl-sn-glycerol</text>
        <dbReference type="Rhea" id="RHEA:17093"/>
        <dbReference type="ChEBI" id="CHEBI:17815"/>
        <dbReference type="ChEBI" id="CHEBI:57880"/>
        <dbReference type="ChEBI" id="CHEBI:58484"/>
        <dbReference type="EC" id="4.6.1.13"/>
    </reaction>
</comment>
<comment type="subcellular location">
    <subcellularLocation>
        <location>Secreted</location>
    </subcellularLocation>
</comment>
<comment type="sequence caution" evidence="3">
    <conflict type="erroneous initiation">
        <sequence resource="EMBL-CDS" id="BAF66313"/>
    </conflict>
</comment>
<name>PLC_STAAE</name>
<accession>P45723</accession>
<accession>A6QD81</accession>
<dbReference type="EC" id="4.6.1.13"/>
<dbReference type="EMBL" id="L19298">
    <property type="protein sequence ID" value="AAA16442.1"/>
    <property type="molecule type" value="Unassigned_DNA"/>
</dbReference>
<dbReference type="EMBL" id="AP009351">
    <property type="protein sequence ID" value="BAF66313.1"/>
    <property type="status" value="ALT_INIT"/>
    <property type="molecule type" value="Genomic_DNA"/>
</dbReference>
<dbReference type="PDB" id="3V16">
    <property type="method" value="X-ray"/>
    <property type="resolution" value="2.05 A"/>
    <property type="chains" value="A=11-312"/>
</dbReference>
<dbReference type="PDB" id="3V18">
    <property type="method" value="X-ray"/>
    <property type="resolution" value="2.34 A"/>
    <property type="chains" value="A=12-312"/>
</dbReference>
<dbReference type="PDB" id="3V1H">
    <property type="method" value="X-ray"/>
    <property type="resolution" value="1.90 A"/>
    <property type="chains" value="A=13-312"/>
</dbReference>
<dbReference type="PDB" id="4F2B">
    <property type="method" value="X-ray"/>
    <property type="resolution" value="2.16 A"/>
    <property type="chains" value="A/B=11-312"/>
</dbReference>
<dbReference type="PDB" id="4F2T">
    <property type="method" value="X-ray"/>
    <property type="resolution" value="2.30 A"/>
    <property type="chains" value="A=11-312"/>
</dbReference>
<dbReference type="PDB" id="4F2U">
    <property type="method" value="X-ray"/>
    <property type="resolution" value="2.19 A"/>
    <property type="chains" value="A=11-312"/>
</dbReference>
<dbReference type="PDB" id="4I8Y">
    <property type="method" value="X-ray"/>
    <property type="resolution" value="2.10 A"/>
    <property type="chains" value="A=11-312"/>
</dbReference>
<dbReference type="PDB" id="4I90">
    <property type="method" value="X-ray"/>
    <property type="resolution" value="1.65 A"/>
    <property type="chains" value="A=11-312"/>
</dbReference>
<dbReference type="PDB" id="4I9J">
    <property type="method" value="X-ray"/>
    <property type="resolution" value="1.85 A"/>
    <property type="chains" value="A=11-312"/>
</dbReference>
<dbReference type="PDB" id="4I9M">
    <property type="method" value="X-ray"/>
    <property type="resolution" value="2.20 A"/>
    <property type="chains" value="A=11-312"/>
</dbReference>
<dbReference type="PDB" id="4I9T">
    <property type="method" value="X-ray"/>
    <property type="resolution" value="2.00 A"/>
    <property type="chains" value="A=11-312"/>
</dbReference>
<dbReference type="PDB" id="4RV3">
    <property type="method" value="X-ray"/>
    <property type="resolution" value="2.00 A"/>
    <property type="chains" value="A=12-312"/>
</dbReference>
<dbReference type="PDB" id="4S3G">
    <property type="method" value="X-ray"/>
    <property type="resolution" value="2.50 A"/>
    <property type="chains" value="A=11-312"/>
</dbReference>
<dbReference type="PDBsum" id="3V16"/>
<dbReference type="PDBsum" id="3V18"/>
<dbReference type="PDBsum" id="3V1H"/>
<dbReference type="PDBsum" id="4F2B"/>
<dbReference type="PDBsum" id="4F2T"/>
<dbReference type="PDBsum" id="4F2U"/>
<dbReference type="PDBsum" id="4I8Y"/>
<dbReference type="PDBsum" id="4I90"/>
<dbReference type="PDBsum" id="4I9J"/>
<dbReference type="PDBsum" id="4I9M"/>
<dbReference type="PDBsum" id="4I9T"/>
<dbReference type="PDBsum" id="4RV3"/>
<dbReference type="PDBsum" id="4S3G"/>
<dbReference type="SMR" id="P45723"/>
<dbReference type="KEGG" id="sae:NWMN_0041"/>
<dbReference type="HOGENOM" id="CLU_024117_3_1_9"/>
<dbReference type="BRENDA" id="4.6.1.13">
    <property type="organism ID" value="3352"/>
</dbReference>
<dbReference type="EvolutionaryTrace" id="P45723"/>
<dbReference type="PHI-base" id="PHI:10913"/>
<dbReference type="Proteomes" id="UP000006386">
    <property type="component" value="Chromosome"/>
</dbReference>
<dbReference type="GO" id="GO:0005576">
    <property type="term" value="C:extracellular region"/>
    <property type="evidence" value="ECO:0007669"/>
    <property type="project" value="UniProtKB-SubCell"/>
</dbReference>
<dbReference type="GO" id="GO:0004436">
    <property type="term" value="F:phosphatidylinositol diacylglycerol-lyase activity"/>
    <property type="evidence" value="ECO:0007669"/>
    <property type="project" value="UniProtKB-EC"/>
</dbReference>
<dbReference type="GO" id="GO:0008081">
    <property type="term" value="F:phosphoric diester hydrolase activity"/>
    <property type="evidence" value="ECO:0007669"/>
    <property type="project" value="InterPro"/>
</dbReference>
<dbReference type="GO" id="GO:0016042">
    <property type="term" value="P:lipid catabolic process"/>
    <property type="evidence" value="ECO:0007669"/>
    <property type="project" value="UniProtKB-KW"/>
</dbReference>
<dbReference type="CDD" id="cd08586">
    <property type="entry name" value="PI-PLCc_BcPLC_like"/>
    <property type="match status" value="1"/>
</dbReference>
<dbReference type="Gene3D" id="3.20.20.190">
    <property type="entry name" value="Phosphatidylinositol (PI) phosphodiesterase"/>
    <property type="match status" value="1"/>
</dbReference>
<dbReference type="InterPro" id="IPR051057">
    <property type="entry name" value="PI-PLC_domain"/>
</dbReference>
<dbReference type="InterPro" id="IPR017946">
    <property type="entry name" value="PLC-like_Pdiesterase_TIM-brl"/>
</dbReference>
<dbReference type="InterPro" id="IPR000909">
    <property type="entry name" value="PLipase_C_PInositol-sp_X_dom"/>
</dbReference>
<dbReference type="PANTHER" id="PTHR13593">
    <property type="match status" value="1"/>
</dbReference>
<dbReference type="PANTHER" id="PTHR13593:SF113">
    <property type="entry name" value="SI:DKEY-266F7.9"/>
    <property type="match status" value="1"/>
</dbReference>
<dbReference type="Pfam" id="PF00388">
    <property type="entry name" value="PI-PLC-X"/>
    <property type="match status" value="1"/>
</dbReference>
<dbReference type="SMART" id="SM00148">
    <property type="entry name" value="PLCXc"/>
    <property type="match status" value="1"/>
</dbReference>
<dbReference type="SUPFAM" id="SSF51695">
    <property type="entry name" value="PLC-like phosphodiesterases"/>
    <property type="match status" value="1"/>
</dbReference>
<dbReference type="PROSITE" id="PS50007">
    <property type="entry name" value="PIPLC_X_DOMAIN"/>
    <property type="match status" value="1"/>
</dbReference>
<gene>
    <name type="primary">plc</name>
    <name type="ordered locus">NWMN_0041</name>
</gene>
<organism>
    <name type="scientific">Staphylococcus aureus (strain Newman)</name>
    <dbReference type="NCBI Taxonomy" id="426430"/>
    <lineage>
        <taxon>Bacteria</taxon>
        <taxon>Bacillati</taxon>
        <taxon>Bacillota</taxon>
        <taxon>Bacilli</taxon>
        <taxon>Bacillales</taxon>
        <taxon>Staphylococcaceae</taxon>
        <taxon>Staphylococcus</taxon>
    </lineage>
</organism>
<reference key="1">
    <citation type="journal article" date="1993" name="Infect. Immun.">
        <title>Cloning, expression, and mutagenesis of phosphatidylinositol-specific phospholipase C from Staphylococcus aureus: a potential staphylococcal virulence factor.</title>
        <authorList>
            <person name="Daugherty S."/>
            <person name="Low M.G."/>
        </authorList>
    </citation>
    <scope>NUCLEOTIDE SEQUENCE [GENOMIC DNA]</scope>
</reference>
<reference key="2">
    <citation type="journal article" date="2008" name="J. Bacteriol.">
        <title>Genome sequence of Staphylococcus aureus strain Newman and comparative analysis of staphylococcal genomes: polymorphism and evolution of two major pathogenicity islands.</title>
        <authorList>
            <person name="Baba T."/>
            <person name="Bae T."/>
            <person name="Schneewind O."/>
            <person name="Takeuchi F."/>
            <person name="Hiramatsu K."/>
        </authorList>
    </citation>
    <scope>NUCLEOTIDE SEQUENCE [LARGE SCALE GENOMIC DNA]</scope>
    <source>
        <strain>Newman</strain>
    </source>
</reference>
<protein>
    <recommendedName>
        <fullName>1-phosphatidylinositol phosphodiesterase</fullName>
        <ecNumber>4.6.1.13</ecNumber>
    </recommendedName>
    <alternativeName>
        <fullName>Phosphatidylinositol diacylglycerol-lyase</fullName>
    </alternativeName>
    <alternativeName>
        <fullName>Phosphatidylinositol-specific phospholipase C</fullName>
        <shortName>PI-PLC</shortName>
    </alternativeName>
</protein>
<evidence type="ECO:0000255" key="1"/>
<evidence type="ECO:0000255" key="2">
    <source>
        <dbReference type="PROSITE-ProRule" id="PRU00270"/>
    </source>
</evidence>
<evidence type="ECO:0000305" key="3"/>
<evidence type="ECO:0007829" key="4">
    <source>
        <dbReference type="PDB" id="3V16"/>
    </source>
</evidence>
<evidence type="ECO:0007829" key="5">
    <source>
        <dbReference type="PDB" id="3V1H"/>
    </source>
</evidence>
<evidence type="ECO:0007829" key="6">
    <source>
        <dbReference type="PDB" id="4I90"/>
    </source>
</evidence>
<evidence type="ECO:0007829" key="7">
    <source>
        <dbReference type="PDB" id="4RV3"/>
    </source>
</evidence>
<sequence length="312" mass="35255">MSGWYHSAHASDSLSKSPENWMSKLDDGKHLTEINIPGSHDSGSFTLKDPVKSVWAKTQDKDYLTQMKSGVRFFDIRGRASADNMISVHHGMVYLHHELGKFLDDAKYYLSAYPNETIVMSMKKDYDSDSKVTKTFEEIFREYYYNNPQYQNLFYTGSNANPTLKETKGKIVLFNRMGGTYIKSGYGADTSGIQWADNATFETKINNGSLNLKVQDEYKDYYDKKVEAVKNLLAKAKTDSNKDNVYVNFLSVASGGSAFNSTYNYASHINPEIAKTIKANGKARTGWLIVDYAGYTWPGYDDIVSEIIDSNK</sequence>
<proteinExistence type="evidence at protein level"/>
<keyword id="KW-0002">3D-structure</keyword>
<keyword id="KW-0442">Lipid degradation</keyword>
<keyword id="KW-0443">Lipid metabolism</keyword>
<keyword id="KW-0456">Lyase</keyword>
<keyword id="KW-0964">Secreted</keyword>
<keyword id="KW-0732">Signal</keyword>
<keyword id="KW-0843">Virulence</keyword>